<feature type="chain" id="PRO_0000296327" description="Cytochrome b559 subunit beta">
    <location>
        <begin position="1"/>
        <end position="51"/>
    </location>
</feature>
<feature type="transmembrane region" description="Helical" evidence="1">
    <location>
        <begin position="26"/>
        <end position="42"/>
    </location>
</feature>
<feature type="binding site" description="axial binding residue" evidence="1">
    <location>
        <position position="30"/>
    </location>
    <ligand>
        <name>heme</name>
        <dbReference type="ChEBI" id="CHEBI:30413"/>
        <note>ligand shared with alpha subunit</note>
    </ligand>
    <ligandPart>
        <name>Fe</name>
        <dbReference type="ChEBI" id="CHEBI:18248"/>
    </ligandPart>
</feature>
<comment type="function">
    <text evidence="1">This b-type cytochrome is tightly associated with the reaction center of photosystem II (PSII). PSII is a light-driven water:plastoquinone oxidoreductase that uses light energy to abstract electrons from H(2)O, generating O(2) and a proton gradient subsequently used for ATP formation. It consists of a core antenna complex that captures photons, and an electron transfer chain that converts photonic excitation into a charge separation.</text>
</comment>
<comment type="cofactor">
    <cofactor evidence="1">
        <name>heme b</name>
        <dbReference type="ChEBI" id="CHEBI:60344"/>
    </cofactor>
    <text evidence="1">With its partner (PsbE) binds heme. PSII binds additional chlorophylls, carotenoids and specific lipids.</text>
</comment>
<comment type="subunit">
    <text evidence="2">Heterodimer of an alpha subunit and a beta subunit. PSII is composed of 1 copy each of membrane proteins PsbA, PsbB, PsbC, PsbD, PsbE, PsbF, PsbH, PsbI, PsbJ, PsbK, PsbL, PsbM, PsbT, PsbY, PsbZ, Psb30/Ycf12, at least 3 peripheral proteins of the oxygen-evolving complex and a large number of cofactors. It forms dimeric complexes.</text>
</comment>
<comment type="subcellular location">
    <subcellularLocation>
        <location evidence="1">Plastid</location>
        <location evidence="1">Chloroplast thylakoid membrane</location>
        <topology evidence="1">Single-pass membrane protein</topology>
    </subcellularLocation>
</comment>
<comment type="similarity">
    <text evidence="1">Belongs to the PsbE/PsbF family.</text>
</comment>
<dbReference type="EMBL" id="DQ851108">
    <property type="protein sequence ID" value="ABG91447.1"/>
    <property type="molecule type" value="Genomic_DNA"/>
</dbReference>
<dbReference type="RefSeq" id="YP_778615.1">
    <property type="nucleotide sequence ID" value="NC_008408.1"/>
</dbReference>
<dbReference type="SMR" id="Q06J12"/>
<dbReference type="GeneID" id="4353032"/>
<dbReference type="GO" id="GO:0009535">
    <property type="term" value="C:chloroplast thylakoid membrane"/>
    <property type="evidence" value="ECO:0007669"/>
    <property type="project" value="UniProtKB-SubCell"/>
</dbReference>
<dbReference type="GO" id="GO:0009539">
    <property type="term" value="C:photosystem II reaction center"/>
    <property type="evidence" value="ECO:0007669"/>
    <property type="project" value="InterPro"/>
</dbReference>
<dbReference type="GO" id="GO:0009055">
    <property type="term" value="F:electron transfer activity"/>
    <property type="evidence" value="ECO:0007669"/>
    <property type="project" value="UniProtKB-UniRule"/>
</dbReference>
<dbReference type="GO" id="GO:0020037">
    <property type="term" value="F:heme binding"/>
    <property type="evidence" value="ECO:0007669"/>
    <property type="project" value="InterPro"/>
</dbReference>
<dbReference type="GO" id="GO:0005506">
    <property type="term" value="F:iron ion binding"/>
    <property type="evidence" value="ECO:0007669"/>
    <property type="project" value="UniProtKB-UniRule"/>
</dbReference>
<dbReference type="GO" id="GO:0009767">
    <property type="term" value="P:photosynthetic electron transport chain"/>
    <property type="evidence" value="ECO:0007669"/>
    <property type="project" value="InterPro"/>
</dbReference>
<dbReference type="HAMAP" id="MF_00643">
    <property type="entry name" value="PSII_PsbF"/>
    <property type="match status" value="1"/>
</dbReference>
<dbReference type="InterPro" id="IPR006241">
    <property type="entry name" value="PSII_cyt_b559_bsu"/>
</dbReference>
<dbReference type="InterPro" id="IPR006216">
    <property type="entry name" value="PSII_cyt_b559_CS"/>
</dbReference>
<dbReference type="InterPro" id="IPR013081">
    <property type="entry name" value="PSII_cyt_b559_N"/>
</dbReference>
<dbReference type="NCBIfam" id="TIGR01333">
    <property type="entry name" value="cyt_b559_beta"/>
    <property type="match status" value="1"/>
</dbReference>
<dbReference type="Pfam" id="PF00283">
    <property type="entry name" value="Cytochrom_B559"/>
    <property type="match status" value="1"/>
</dbReference>
<dbReference type="PIRSF" id="PIRSF000037">
    <property type="entry name" value="PsbF"/>
    <property type="match status" value="1"/>
</dbReference>
<dbReference type="SUPFAM" id="SSF161045">
    <property type="entry name" value="Cytochrome b559 subunits"/>
    <property type="match status" value="1"/>
</dbReference>
<dbReference type="PROSITE" id="PS00537">
    <property type="entry name" value="CYTOCHROME_B559"/>
    <property type="match status" value="1"/>
</dbReference>
<proteinExistence type="inferred from homology"/>
<sequence length="51" mass="5924">MTIKNKTINLIENKKPVVYPIFTFRWLAVHALAVPTVFFIGSITSMQFIQR</sequence>
<protein>
    <recommendedName>
        <fullName evidence="1">Cytochrome b559 subunit beta</fullName>
    </recommendedName>
    <alternativeName>
        <fullName evidence="1">PSII reaction center subunit VI</fullName>
    </alternativeName>
</protein>
<name>PSBF_BIGNA</name>
<gene>
    <name evidence="1" type="primary">psbF</name>
</gene>
<organism>
    <name type="scientific">Bigelowiella natans</name>
    <name type="common">Pedinomonas minutissima</name>
    <name type="synonym">Chlorarachnion sp. (strain CCMP621)</name>
    <dbReference type="NCBI Taxonomy" id="227086"/>
    <lineage>
        <taxon>Eukaryota</taxon>
        <taxon>Sar</taxon>
        <taxon>Rhizaria</taxon>
        <taxon>Cercozoa</taxon>
        <taxon>Chlorarachniophyceae</taxon>
        <taxon>Bigelowiella</taxon>
    </lineage>
</organism>
<accession>Q06J12</accession>
<reference key="1">
    <citation type="journal article" date="2007" name="Mol. Biol. Evol.">
        <title>The complete chloroplast genome of the chlorarachniophyte Bigelowiella natans: evidence for independent origins of chlorarachniophyte and euglenid secondary endosymbionts.</title>
        <authorList>
            <person name="Rogers M.B."/>
            <person name="Gilson P.R."/>
            <person name="Su V."/>
            <person name="McFadden G.I."/>
            <person name="Keeling P.J."/>
        </authorList>
    </citation>
    <scope>NUCLEOTIDE SEQUENCE [LARGE SCALE GENOMIC DNA]</scope>
</reference>
<keyword id="KW-0150">Chloroplast</keyword>
<keyword id="KW-0249">Electron transport</keyword>
<keyword id="KW-0349">Heme</keyword>
<keyword id="KW-0408">Iron</keyword>
<keyword id="KW-0472">Membrane</keyword>
<keyword id="KW-0479">Metal-binding</keyword>
<keyword id="KW-0602">Photosynthesis</keyword>
<keyword id="KW-0604">Photosystem II</keyword>
<keyword id="KW-0934">Plastid</keyword>
<keyword id="KW-0793">Thylakoid</keyword>
<keyword id="KW-0812">Transmembrane</keyword>
<keyword id="KW-1133">Transmembrane helix</keyword>
<keyword id="KW-0813">Transport</keyword>
<geneLocation type="chloroplast"/>
<evidence type="ECO:0000255" key="1">
    <source>
        <dbReference type="HAMAP-Rule" id="MF_00643"/>
    </source>
</evidence>
<evidence type="ECO:0000305" key="2"/>